<dbReference type="EC" id="4.1.1.65" evidence="1"/>
<dbReference type="EMBL" id="CP000880">
    <property type="protein sequence ID" value="ABX23116.1"/>
    <property type="molecule type" value="Genomic_DNA"/>
</dbReference>
<dbReference type="SMR" id="A9MFQ0"/>
<dbReference type="STRING" id="41514.SARI_03283"/>
<dbReference type="KEGG" id="ses:SARI_03283"/>
<dbReference type="HOGENOM" id="CLU_029061_4_1_6"/>
<dbReference type="UniPathway" id="UPA00558">
    <property type="reaction ID" value="UER00616"/>
</dbReference>
<dbReference type="Proteomes" id="UP000002084">
    <property type="component" value="Chromosome"/>
</dbReference>
<dbReference type="GO" id="GO:0005886">
    <property type="term" value="C:plasma membrane"/>
    <property type="evidence" value="ECO:0007669"/>
    <property type="project" value="UniProtKB-SubCell"/>
</dbReference>
<dbReference type="GO" id="GO:0004609">
    <property type="term" value="F:phosphatidylserine decarboxylase activity"/>
    <property type="evidence" value="ECO:0007669"/>
    <property type="project" value="UniProtKB-UniRule"/>
</dbReference>
<dbReference type="GO" id="GO:0006646">
    <property type="term" value="P:phosphatidylethanolamine biosynthetic process"/>
    <property type="evidence" value="ECO:0007669"/>
    <property type="project" value="UniProtKB-UniRule"/>
</dbReference>
<dbReference type="HAMAP" id="MF_00662">
    <property type="entry name" value="PS_decarb_PSD_B_type1"/>
    <property type="match status" value="1"/>
</dbReference>
<dbReference type="InterPro" id="IPR003817">
    <property type="entry name" value="PS_Dcarbxylase"/>
</dbReference>
<dbReference type="InterPro" id="IPR033177">
    <property type="entry name" value="PSD-B"/>
</dbReference>
<dbReference type="InterPro" id="IPR033178">
    <property type="entry name" value="PSD_type1_pro"/>
</dbReference>
<dbReference type="NCBIfam" id="TIGR00163">
    <property type="entry name" value="PS_decarb"/>
    <property type="match status" value="1"/>
</dbReference>
<dbReference type="PANTHER" id="PTHR10067">
    <property type="entry name" value="PHOSPHATIDYLSERINE DECARBOXYLASE"/>
    <property type="match status" value="1"/>
</dbReference>
<dbReference type="PANTHER" id="PTHR10067:SF6">
    <property type="entry name" value="PHOSPHATIDYLSERINE DECARBOXYLASE PROENZYME, MITOCHONDRIAL"/>
    <property type="match status" value="1"/>
</dbReference>
<dbReference type="Pfam" id="PF02666">
    <property type="entry name" value="PS_Dcarbxylase"/>
    <property type="match status" value="1"/>
</dbReference>
<feature type="chain" id="PRO_1000082898" description="Phosphatidylserine decarboxylase beta chain" evidence="1">
    <location>
        <begin position="1"/>
        <end position="253"/>
    </location>
</feature>
<feature type="chain" id="PRO_1000082899" description="Phosphatidylserine decarboxylase alpha chain" evidence="1">
    <location>
        <begin position="254"/>
        <end position="322"/>
    </location>
</feature>
<feature type="region of interest" description="Disordered" evidence="2">
    <location>
        <begin position="294"/>
        <end position="322"/>
    </location>
</feature>
<feature type="compositionally biased region" description="Basic and acidic residues" evidence="2">
    <location>
        <begin position="303"/>
        <end position="322"/>
    </location>
</feature>
<feature type="active site" description="Charge relay system; for autoendoproteolytic cleavage activity" evidence="1">
    <location>
        <position position="90"/>
    </location>
</feature>
<feature type="active site" description="Charge relay system; for autoendoproteolytic cleavage activity" evidence="1">
    <location>
        <position position="147"/>
    </location>
</feature>
<feature type="active site" description="Charge relay system; for autoendoproteolytic cleavage activity" evidence="1">
    <location>
        <position position="254"/>
    </location>
</feature>
<feature type="active site" description="Schiff-base intermediate with substrate; via pyruvic acid; for decarboxylase activity" evidence="1">
    <location>
        <position position="254"/>
    </location>
</feature>
<feature type="site" description="Cleavage (non-hydrolytic); by autocatalysis" evidence="1">
    <location>
        <begin position="253"/>
        <end position="254"/>
    </location>
</feature>
<feature type="modified residue" description="Pyruvic acid (Ser); by autocatalysis" evidence="1">
    <location>
        <position position="254"/>
    </location>
</feature>
<accession>A9MFQ0</accession>
<comment type="function">
    <text evidence="1">Catalyzes the formation of phosphatidylethanolamine (PtdEtn) from phosphatidylserine (PtdSer).</text>
</comment>
<comment type="catalytic activity">
    <reaction evidence="1">
        <text>a 1,2-diacyl-sn-glycero-3-phospho-L-serine + H(+) = a 1,2-diacyl-sn-glycero-3-phosphoethanolamine + CO2</text>
        <dbReference type="Rhea" id="RHEA:20828"/>
        <dbReference type="ChEBI" id="CHEBI:15378"/>
        <dbReference type="ChEBI" id="CHEBI:16526"/>
        <dbReference type="ChEBI" id="CHEBI:57262"/>
        <dbReference type="ChEBI" id="CHEBI:64612"/>
        <dbReference type="EC" id="4.1.1.65"/>
    </reaction>
</comment>
<comment type="cofactor">
    <cofactor evidence="1">
        <name>pyruvate</name>
        <dbReference type="ChEBI" id="CHEBI:15361"/>
    </cofactor>
    <text evidence="1">Binds 1 pyruvoyl group covalently per subunit.</text>
</comment>
<comment type="pathway">
    <text evidence="1">Phospholipid metabolism; phosphatidylethanolamine biosynthesis; phosphatidylethanolamine from CDP-diacylglycerol: step 2/2.</text>
</comment>
<comment type="subunit">
    <text evidence="1">Heterodimer of a large membrane-associated beta subunit and a small pyruvoyl-containing alpha subunit.</text>
</comment>
<comment type="subcellular location">
    <subcellularLocation>
        <location evidence="1">Cell membrane</location>
        <topology evidence="1">Peripheral membrane protein</topology>
    </subcellularLocation>
</comment>
<comment type="PTM">
    <text evidence="1">Is synthesized initially as an inactive proenzyme. Formation of the active enzyme involves a self-maturation process in which the active site pyruvoyl group is generated from an internal serine residue via an autocatalytic post-translational modification. Two non-identical subunits are generated from the proenzyme in this reaction, and the pyruvate is formed at the N-terminus of the alpha chain, which is derived from the carboxyl end of the proenzyme. The autoendoproteolytic cleavage occurs by a canonical serine protease mechanism, in which the side chain hydroxyl group of the serine supplies its oxygen atom to form the C-terminus of the beta chain, while the remainder of the serine residue undergoes an oxidative deamination to produce ammonia and the pyruvoyl prosthetic group on the alpha chain. During this reaction, the Ser that is part of the protease active site of the proenzyme becomes the pyruvoyl prosthetic group, which constitutes an essential element of the active site of the mature decarboxylase.</text>
</comment>
<comment type="similarity">
    <text evidence="1">Belongs to the phosphatidylserine decarboxylase family. PSD-B subfamily. Prokaryotic type I sub-subfamily.</text>
</comment>
<reference key="1">
    <citation type="submission" date="2007-11" db="EMBL/GenBank/DDBJ databases">
        <authorList>
            <consortium name="The Salmonella enterica serovar Arizonae Genome Sequencing Project"/>
            <person name="McClelland M."/>
            <person name="Sanderson E.K."/>
            <person name="Porwollik S."/>
            <person name="Spieth J."/>
            <person name="Clifton W.S."/>
            <person name="Fulton R."/>
            <person name="Chunyan W."/>
            <person name="Wollam A."/>
            <person name="Shah N."/>
            <person name="Pepin K."/>
            <person name="Bhonagiri V."/>
            <person name="Nash W."/>
            <person name="Johnson M."/>
            <person name="Thiruvilangam P."/>
            <person name="Wilson R."/>
        </authorList>
    </citation>
    <scope>NUCLEOTIDE SEQUENCE [LARGE SCALE GENOMIC DNA]</scope>
    <source>
        <strain>ATCC BAA-731 / CDC346-86 / RSK2980</strain>
    </source>
</reference>
<sequence>MLNSFKLSLQYILPKLWLTRLAGWGASKRAGWLTKLVIDLFVKYYKVDMTETQKPDTASYRTFNDFFVRPLRDDVRPLNTDPNILVMPADGVISQLGRIEEDKILQAKGHNYSLEALLAGNYLMADKFRNGTFVTTYLSPRDYHRVHMPCNGILREMIYVPGELFSVNHLTAQNVPNLFARNERVICLFDTEFGPMAQILVGATIVGSIETVWAGTITPPREGIIKRWTWPAGENEDSVALLKGQEMGRFKLGSTVINLFAPGKVDLIESLANLSVTKIGQPLATSTEAFVAPEVEPVPLPEEEIKAEHDASPLVDDKKDET</sequence>
<name>PSD_SALAR</name>
<keyword id="KW-1003">Cell membrane</keyword>
<keyword id="KW-0210">Decarboxylase</keyword>
<keyword id="KW-0444">Lipid biosynthesis</keyword>
<keyword id="KW-0443">Lipid metabolism</keyword>
<keyword id="KW-0456">Lyase</keyword>
<keyword id="KW-0472">Membrane</keyword>
<keyword id="KW-0594">Phospholipid biosynthesis</keyword>
<keyword id="KW-1208">Phospholipid metabolism</keyword>
<keyword id="KW-0670">Pyruvate</keyword>
<keyword id="KW-1185">Reference proteome</keyword>
<keyword id="KW-0865">Zymogen</keyword>
<proteinExistence type="inferred from homology"/>
<evidence type="ECO:0000255" key="1">
    <source>
        <dbReference type="HAMAP-Rule" id="MF_00662"/>
    </source>
</evidence>
<evidence type="ECO:0000256" key="2">
    <source>
        <dbReference type="SAM" id="MobiDB-lite"/>
    </source>
</evidence>
<protein>
    <recommendedName>
        <fullName evidence="1">Phosphatidylserine decarboxylase proenzyme</fullName>
        <ecNumber evidence="1">4.1.1.65</ecNumber>
    </recommendedName>
    <component>
        <recommendedName>
            <fullName evidence="1">Phosphatidylserine decarboxylase alpha chain</fullName>
        </recommendedName>
    </component>
    <component>
        <recommendedName>
            <fullName evidence="1">Phosphatidylserine decarboxylase beta chain</fullName>
        </recommendedName>
    </component>
</protein>
<gene>
    <name evidence="1" type="primary">psd</name>
    <name type="ordered locus">SARI_03283</name>
</gene>
<organism>
    <name type="scientific">Salmonella arizonae (strain ATCC BAA-731 / CDC346-86 / RSK2980)</name>
    <dbReference type="NCBI Taxonomy" id="41514"/>
    <lineage>
        <taxon>Bacteria</taxon>
        <taxon>Pseudomonadati</taxon>
        <taxon>Pseudomonadota</taxon>
        <taxon>Gammaproteobacteria</taxon>
        <taxon>Enterobacterales</taxon>
        <taxon>Enterobacteriaceae</taxon>
        <taxon>Salmonella</taxon>
    </lineage>
</organism>